<keyword id="KW-0967">Endosome</keyword>
<keyword id="KW-0333">Golgi apparatus</keyword>
<keyword id="KW-0342">GTP-binding</keyword>
<keyword id="KW-0449">Lipoprotein</keyword>
<keyword id="KW-0472">Membrane</keyword>
<keyword id="KW-0547">Nucleotide-binding</keyword>
<keyword id="KW-0636">Prenylation</keyword>
<keyword id="KW-0653">Protein transport</keyword>
<keyword id="KW-1185">Reference proteome</keyword>
<keyword id="KW-0813">Transport</keyword>
<evidence type="ECO:0000250" key="1"/>
<evidence type="ECO:0000256" key="2">
    <source>
        <dbReference type="SAM" id="MobiDB-lite"/>
    </source>
</evidence>
<evidence type="ECO:0000269" key="3">
    <source>
    </source>
</evidence>
<evidence type="ECO:0000305" key="4"/>
<evidence type="ECO:0000305" key="5">
    <source>
    </source>
</evidence>
<name>RAA2D_ARATH</name>
<comment type="function">
    <text evidence="1">Intracellular vesicle trafficking and protein transport.</text>
</comment>
<comment type="subcellular location">
    <subcellularLocation>
        <location evidence="3">Endosome membrane</location>
    </subcellularLocation>
    <subcellularLocation>
        <location evidence="5">Golgi apparatus</location>
        <location evidence="5">trans-Golgi network membrane</location>
        <topology evidence="5">Lipid-anchor</topology>
    </subcellularLocation>
    <text>During cytokinesis located to the growing margins of the cell plate.</text>
</comment>
<comment type="tissue specificity">
    <text evidence="3">Expressed in root tips.</text>
</comment>
<comment type="similarity">
    <text evidence="4">Belongs to the small GTPase superfamily. Rab family.</text>
</comment>
<proteinExistence type="evidence at transcript level"/>
<accession>Q9FIF9</accession>
<reference key="1">
    <citation type="journal article" date="1998" name="DNA Res.">
        <title>Structural analysis of Arabidopsis thaliana chromosome 5. VIII. Sequence features of the regions of 1,081,958 bp covered by seventeen physically assigned P1 and TAC clones.</title>
        <authorList>
            <person name="Asamizu E."/>
            <person name="Sato S."/>
            <person name="Kaneko T."/>
            <person name="Nakamura Y."/>
            <person name="Kotani H."/>
            <person name="Miyajima N."/>
            <person name="Tabata S."/>
        </authorList>
    </citation>
    <scope>NUCLEOTIDE SEQUENCE [LARGE SCALE GENOMIC DNA]</scope>
    <source>
        <strain>cv. Columbia</strain>
    </source>
</reference>
<reference key="2">
    <citation type="journal article" date="2017" name="Plant J.">
        <title>Araport11: a complete reannotation of the Arabidopsis thaliana reference genome.</title>
        <authorList>
            <person name="Cheng C.Y."/>
            <person name="Krishnakumar V."/>
            <person name="Chan A.P."/>
            <person name="Thibaud-Nissen F."/>
            <person name="Schobel S."/>
            <person name="Town C.D."/>
        </authorList>
    </citation>
    <scope>GENOME REANNOTATION</scope>
    <source>
        <strain>cv. Columbia</strain>
    </source>
</reference>
<reference key="3">
    <citation type="journal article" date="2003" name="Science">
        <title>Empirical analysis of transcriptional activity in the Arabidopsis genome.</title>
        <authorList>
            <person name="Yamada K."/>
            <person name="Lim J."/>
            <person name="Dale J.M."/>
            <person name="Chen H."/>
            <person name="Shinn P."/>
            <person name="Palm C.J."/>
            <person name="Southwick A.M."/>
            <person name="Wu H.C."/>
            <person name="Kim C.J."/>
            <person name="Nguyen M."/>
            <person name="Pham P.K."/>
            <person name="Cheuk R.F."/>
            <person name="Karlin-Newmann G."/>
            <person name="Liu S.X."/>
            <person name="Lam B."/>
            <person name="Sakano H."/>
            <person name="Wu T."/>
            <person name="Yu G."/>
            <person name="Miranda M."/>
            <person name="Quach H.L."/>
            <person name="Tripp M."/>
            <person name="Chang C.H."/>
            <person name="Lee J.M."/>
            <person name="Toriumi M.J."/>
            <person name="Chan M.M."/>
            <person name="Tang C.C."/>
            <person name="Onodera C.S."/>
            <person name="Deng J.M."/>
            <person name="Akiyama K."/>
            <person name="Ansari Y."/>
            <person name="Arakawa T."/>
            <person name="Banh J."/>
            <person name="Banno F."/>
            <person name="Bowser L."/>
            <person name="Brooks S.Y."/>
            <person name="Carninci P."/>
            <person name="Chao Q."/>
            <person name="Choy N."/>
            <person name="Enju A."/>
            <person name="Goldsmith A.D."/>
            <person name="Gurjal M."/>
            <person name="Hansen N.F."/>
            <person name="Hayashizaki Y."/>
            <person name="Johnson-Hopson C."/>
            <person name="Hsuan V.W."/>
            <person name="Iida K."/>
            <person name="Karnes M."/>
            <person name="Khan S."/>
            <person name="Koesema E."/>
            <person name="Ishida J."/>
            <person name="Jiang P.X."/>
            <person name="Jones T."/>
            <person name="Kawai J."/>
            <person name="Kamiya A."/>
            <person name="Meyers C."/>
            <person name="Nakajima M."/>
            <person name="Narusaka M."/>
            <person name="Seki M."/>
            <person name="Sakurai T."/>
            <person name="Satou M."/>
            <person name="Tamse R."/>
            <person name="Vaysberg M."/>
            <person name="Wallender E.K."/>
            <person name="Wong C."/>
            <person name="Yamamura Y."/>
            <person name="Yuan S."/>
            <person name="Shinozaki K."/>
            <person name="Davis R.W."/>
            <person name="Theologis A."/>
            <person name="Ecker J.R."/>
        </authorList>
    </citation>
    <scope>NUCLEOTIDE SEQUENCE [LARGE SCALE MRNA]</scope>
    <source>
        <strain>cv. Columbia</strain>
    </source>
</reference>
<reference key="4">
    <citation type="journal article" date="2003" name="Plant Physiol.">
        <title>Analysis of the small GTPase gene superfamily of Arabidopsis.</title>
        <authorList>
            <person name="Vernoud V."/>
            <person name="Horton A.C."/>
            <person name="Yang Z."/>
            <person name="Nielsen E."/>
        </authorList>
    </citation>
    <scope>GENE FAMILY</scope>
    <scope>NOMENCLATURE</scope>
</reference>
<reference key="5">
    <citation type="journal article" date="2008" name="Plant Cell">
        <title>Rab-A2 and Rab-A3 GTPases define a trans-Golgi endosomal membrane domain in Arabidopsis that contributes substantially to the cell plate.</title>
        <authorList>
            <person name="Chow C.M."/>
            <person name="Neto H."/>
            <person name="Foucart C."/>
            <person name="Moore I."/>
        </authorList>
    </citation>
    <scope>SUBCELLULAR LOCATION</scope>
    <scope>TISSUE SPECIFICITY</scope>
</reference>
<gene>
    <name type="primary">RABA2D</name>
    <name type="ordered locus">At5g59150</name>
    <name type="ORF">MNC17.6</name>
</gene>
<sequence>MAHRVEQDYDYLFKIVLIGDSGVGKTNILSRFTRNEFCLESKSTIGVEFATRTLQVEGKTVKAQIWDTAGQERYRAITSAYYRGAVGALLVYDITKRQTFDNVLRWLRELRDHADSNIVIMMAGNKADLNHLRSVAEEDGQTLAETEGLSFLETSALEATNVEKAFQTVLAEIYHIISKKALAAQEAAAANSAIPGQGTTINVEDTSGAGKRGCCST</sequence>
<organism>
    <name type="scientific">Arabidopsis thaliana</name>
    <name type="common">Mouse-ear cress</name>
    <dbReference type="NCBI Taxonomy" id="3702"/>
    <lineage>
        <taxon>Eukaryota</taxon>
        <taxon>Viridiplantae</taxon>
        <taxon>Streptophyta</taxon>
        <taxon>Embryophyta</taxon>
        <taxon>Tracheophyta</taxon>
        <taxon>Spermatophyta</taxon>
        <taxon>Magnoliopsida</taxon>
        <taxon>eudicotyledons</taxon>
        <taxon>Gunneridae</taxon>
        <taxon>Pentapetalae</taxon>
        <taxon>rosids</taxon>
        <taxon>malvids</taxon>
        <taxon>Brassicales</taxon>
        <taxon>Brassicaceae</taxon>
        <taxon>Camelineae</taxon>
        <taxon>Arabidopsis</taxon>
    </lineage>
</organism>
<protein>
    <recommendedName>
        <fullName>Ras-related protein RABA2d</fullName>
        <shortName>AtRABA2d</shortName>
    </recommendedName>
</protein>
<feature type="chain" id="PRO_0000407342" description="Ras-related protein RABA2d">
    <location>
        <begin position="1"/>
        <end position="217"/>
    </location>
</feature>
<feature type="region of interest" description="Disordered" evidence="2">
    <location>
        <begin position="196"/>
        <end position="217"/>
    </location>
</feature>
<feature type="short sequence motif" description="Effector region" evidence="1">
    <location>
        <begin position="41"/>
        <end position="49"/>
    </location>
</feature>
<feature type="binding site" evidence="1">
    <location>
        <begin position="19"/>
        <end position="26"/>
    </location>
    <ligand>
        <name>GTP</name>
        <dbReference type="ChEBI" id="CHEBI:37565"/>
    </ligand>
</feature>
<feature type="binding site" evidence="1">
    <location>
        <begin position="67"/>
        <end position="71"/>
    </location>
    <ligand>
        <name>GTP</name>
        <dbReference type="ChEBI" id="CHEBI:37565"/>
    </ligand>
</feature>
<feature type="binding site" evidence="1">
    <location>
        <begin position="125"/>
        <end position="128"/>
    </location>
    <ligand>
        <name>GTP</name>
        <dbReference type="ChEBI" id="CHEBI:37565"/>
    </ligand>
</feature>
<feature type="binding site" evidence="1">
    <location>
        <begin position="155"/>
        <end position="156"/>
    </location>
    <ligand>
        <name>GTP</name>
        <dbReference type="ChEBI" id="CHEBI:37565"/>
    </ligand>
</feature>
<feature type="lipid moiety-binding region" description="S-geranylgeranyl cysteine" evidence="1">
    <location>
        <position position="214"/>
    </location>
</feature>
<feature type="lipid moiety-binding region" description="S-geranylgeranyl cysteine" evidence="1">
    <location>
        <position position="215"/>
    </location>
</feature>
<dbReference type="EMBL" id="AB016890">
    <property type="protein sequence ID" value="BAB09761.1"/>
    <property type="molecule type" value="Genomic_DNA"/>
</dbReference>
<dbReference type="EMBL" id="CP002688">
    <property type="protein sequence ID" value="AED97149.1"/>
    <property type="molecule type" value="Genomic_DNA"/>
</dbReference>
<dbReference type="EMBL" id="AF370127">
    <property type="protein sequence ID" value="AAK43942.1"/>
    <property type="molecule type" value="mRNA"/>
</dbReference>
<dbReference type="EMBL" id="AY040051">
    <property type="protein sequence ID" value="AAK64109.1"/>
    <property type="molecule type" value="mRNA"/>
</dbReference>
<dbReference type="RefSeq" id="NP_200723.1">
    <property type="nucleotide sequence ID" value="NM_125305.5"/>
</dbReference>
<dbReference type="SMR" id="Q9FIF9"/>
<dbReference type="FunCoup" id="Q9FIF9">
    <property type="interactions" value="2941"/>
</dbReference>
<dbReference type="STRING" id="3702.Q9FIF9"/>
<dbReference type="iPTMnet" id="Q9FIF9"/>
<dbReference type="PaxDb" id="3702-AT5G59150.1"/>
<dbReference type="ProteomicsDB" id="236622"/>
<dbReference type="EnsemblPlants" id="AT5G59150.1">
    <property type="protein sequence ID" value="AT5G59150.1"/>
    <property type="gene ID" value="AT5G59150"/>
</dbReference>
<dbReference type="GeneID" id="836033"/>
<dbReference type="Gramene" id="AT5G59150.1">
    <property type="protein sequence ID" value="AT5G59150.1"/>
    <property type="gene ID" value="AT5G59150"/>
</dbReference>
<dbReference type="KEGG" id="ath:AT5G59150"/>
<dbReference type="Araport" id="AT5G59150"/>
<dbReference type="TAIR" id="AT5G59150">
    <property type="gene designation" value="RABA2D"/>
</dbReference>
<dbReference type="eggNOG" id="KOG0087">
    <property type="taxonomic scope" value="Eukaryota"/>
</dbReference>
<dbReference type="HOGENOM" id="CLU_041217_23_0_1"/>
<dbReference type="InParanoid" id="Q9FIF9"/>
<dbReference type="OMA" id="MGHRIEN"/>
<dbReference type="OrthoDB" id="9989112at2759"/>
<dbReference type="PhylomeDB" id="Q9FIF9"/>
<dbReference type="PRO" id="PR:Q9FIF9"/>
<dbReference type="Proteomes" id="UP000006548">
    <property type="component" value="Chromosome 5"/>
</dbReference>
<dbReference type="ExpressionAtlas" id="Q9FIF9">
    <property type="expression patterns" value="baseline and differential"/>
</dbReference>
<dbReference type="GO" id="GO:0009504">
    <property type="term" value="C:cell plate"/>
    <property type="evidence" value="ECO:0000314"/>
    <property type="project" value="TAIR"/>
</dbReference>
<dbReference type="GO" id="GO:0005768">
    <property type="term" value="C:endosome"/>
    <property type="evidence" value="ECO:0000314"/>
    <property type="project" value="TAIR"/>
</dbReference>
<dbReference type="GO" id="GO:0010008">
    <property type="term" value="C:endosome membrane"/>
    <property type="evidence" value="ECO:0007669"/>
    <property type="project" value="UniProtKB-SubCell"/>
</dbReference>
<dbReference type="GO" id="GO:0005794">
    <property type="term" value="C:Golgi apparatus"/>
    <property type="evidence" value="ECO:0007669"/>
    <property type="project" value="UniProtKB-SubCell"/>
</dbReference>
<dbReference type="GO" id="GO:0009536">
    <property type="term" value="C:plastid"/>
    <property type="evidence" value="ECO:0007005"/>
    <property type="project" value="TAIR"/>
</dbReference>
<dbReference type="GO" id="GO:0005525">
    <property type="term" value="F:GTP binding"/>
    <property type="evidence" value="ECO:0007669"/>
    <property type="project" value="UniProtKB-KW"/>
</dbReference>
<dbReference type="GO" id="GO:0003924">
    <property type="term" value="F:GTPase activity"/>
    <property type="evidence" value="ECO:0007669"/>
    <property type="project" value="InterPro"/>
</dbReference>
<dbReference type="GO" id="GO:0042546">
    <property type="term" value="P:cell wall biogenesis"/>
    <property type="evidence" value="ECO:0000315"/>
    <property type="project" value="TAIR"/>
</dbReference>
<dbReference type="GO" id="GO:0015031">
    <property type="term" value="P:protein transport"/>
    <property type="evidence" value="ECO:0007669"/>
    <property type="project" value="UniProtKB-KW"/>
</dbReference>
<dbReference type="CDD" id="cd01868">
    <property type="entry name" value="Rab11_like"/>
    <property type="match status" value="1"/>
</dbReference>
<dbReference type="FunFam" id="3.40.50.300:FF:000067">
    <property type="entry name" value="ras-related protein RABA1f"/>
    <property type="match status" value="1"/>
</dbReference>
<dbReference type="Gene3D" id="3.40.50.300">
    <property type="entry name" value="P-loop containing nucleotide triphosphate hydrolases"/>
    <property type="match status" value="1"/>
</dbReference>
<dbReference type="InterPro" id="IPR027417">
    <property type="entry name" value="P-loop_NTPase"/>
</dbReference>
<dbReference type="InterPro" id="IPR050209">
    <property type="entry name" value="Rab_GTPases_membrane_traffic"/>
</dbReference>
<dbReference type="InterPro" id="IPR005225">
    <property type="entry name" value="Small_GTP-bd"/>
</dbReference>
<dbReference type="InterPro" id="IPR001806">
    <property type="entry name" value="Small_GTPase"/>
</dbReference>
<dbReference type="NCBIfam" id="TIGR00231">
    <property type="entry name" value="small_GTP"/>
    <property type="match status" value="1"/>
</dbReference>
<dbReference type="PANTHER" id="PTHR47979">
    <property type="entry name" value="DRAB11-RELATED"/>
    <property type="match status" value="1"/>
</dbReference>
<dbReference type="Pfam" id="PF00071">
    <property type="entry name" value="Ras"/>
    <property type="match status" value="1"/>
</dbReference>
<dbReference type="PRINTS" id="PR00449">
    <property type="entry name" value="RASTRNSFRMNG"/>
</dbReference>
<dbReference type="SMART" id="SM00177">
    <property type="entry name" value="ARF"/>
    <property type="match status" value="1"/>
</dbReference>
<dbReference type="SMART" id="SM00175">
    <property type="entry name" value="RAB"/>
    <property type="match status" value="1"/>
</dbReference>
<dbReference type="SMART" id="SM00176">
    <property type="entry name" value="RAN"/>
    <property type="match status" value="1"/>
</dbReference>
<dbReference type="SMART" id="SM00173">
    <property type="entry name" value="RAS"/>
    <property type="match status" value="1"/>
</dbReference>
<dbReference type="SMART" id="SM00174">
    <property type="entry name" value="RHO"/>
    <property type="match status" value="1"/>
</dbReference>
<dbReference type="SUPFAM" id="SSF52540">
    <property type="entry name" value="P-loop containing nucleoside triphosphate hydrolases"/>
    <property type="match status" value="1"/>
</dbReference>
<dbReference type="PROSITE" id="PS51419">
    <property type="entry name" value="RAB"/>
    <property type="match status" value="1"/>
</dbReference>